<name>Y062_PSYCK</name>
<evidence type="ECO:0000255" key="1">
    <source>
        <dbReference type="HAMAP-Rule" id="MF_00758"/>
    </source>
</evidence>
<reference key="1">
    <citation type="submission" date="2006-03" db="EMBL/GenBank/DDBJ databases">
        <title>Complete sequence of chromosome of Psychrobacter cryohalolentis K5.</title>
        <authorList>
            <consortium name="US DOE Joint Genome Institute"/>
            <person name="Copeland A."/>
            <person name="Lucas S."/>
            <person name="Lapidus A."/>
            <person name="Barry K."/>
            <person name="Detter J.C."/>
            <person name="Glavina T."/>
            <person name="Hammon N."/>
            <person name="Israni S."/>
            <person name="Dalin E."/>
            <person name="Tice H."/>
            <person name="Pitluck S."/>
            <person name="Brettin T."/>
            <person name="Bruce D."/>
            <person name="Han C."/>
            <person name="Tapia R."/>
            <person name="Sims D.R."/>
            <person name="Gilna P."/>
            <person name="Schmutz J."/>
            <person name="Larimer F."/>
            <person name="Land M."/>
            <person name="Hauser L."/>
            <person name="Kyrpides N."/>
            <person name="Kim E."/>
            <person name="Richardson P."/>
        </authorList>
    </citation>
    <scope>NUCLEOTIDE SEQUENCE [LARGE SCALE GENOMIC DNA]</scope>
    <source>
        <strain>ATCC BAA-1226 / DSM 17306 / VKM B-2378 / K5</strain>
    </source>
</reference>
<feature type="chain" id="PRO_0000258861" description="UPF0301 protein Pcryo_0062">
    <location>
        <begin position="1"/>
        <end position="187"/>
    </location>
</feature>
<sequence>MSKANLTHHFLIAAPELSDPRFEQALIYICRHDKHGALGLMVNRPLEQARVGKLLEDLDIEVTDAQVMEDLALEGGPMYPEVGFVLHTGQPEWASSFAISENVCITTSQDILKRIAAGQGVGHYQLCLGHASWGKKQLDRELANGDWLVCPADLNLLFDTPFEERWQMAADKIGVNFDYLSSDIGHA</sequence>
<accession>Q1QEQ7</accession>
<proteinExistence type="inferred from homology"/>
<dbReference type="EMBL" id="CP000323">
    <property type="protein sequence ID" value="ABE73846.1"/>
    <property type="molecule type" value="Genomic_DNA"/>
</dbReference>
<dbReference type="RefSeq" id="WP_011512437.1">
    <property type="nucleotide sequence ID" value="NC_007969.1"/>
</dbReference>
<dbReference type="SMR" id="Q1QEQ7"/>
<dbReference type="STRING" id="335284.Pcryo_0062"/>
<dbReference type="KEGG" id="pcr:Pcryo_0062"/>
<dbReference type="eggNOG" id="COG1678">
    <property type="taxonomic scope" value="Bacteria"/>
</dbReference>
<dbReference type="HOGENOM" id="CLU_057596_1_0_6"/>
<dbReference type="Proteomes" id="UP000002425">
    <property type="component" value="Chromosome"/>
</dbReference>
<dbReference type="GO" id="GO:0005829">
    <property type="term" value="C:cytosol"/>
    <property type="evidence" value="ECO:0007669"/>
    <property type="project" value="TreeGrafter"/>
</dbReference>
<dbReference type="Gene3D" id="3.40.1740.10">
    <property type="entry name" value="VC0467-like"/>
    <property type="match status" value="1"/>
</dbReference>
<dbReference type="HAMAP" id="MF_00758">
    <property type="entry name" value="UPF0301"/>
    <property type="match status" value="1"/>
</dbReference>
<dbReference type="InterPro" id="IPR003774">
    <property type="entry name" value="AlgH-like"/>
</dbReference>
<dbReference type="NCBIfam" id="NF001266">
    <property type="entry name" value="PRK00228.1-1"/>
    <property type="match status" value="1"/>
</dbReference>
<dbReference type="PANTHER" id="PTHR30327">
    <property type="entry name" value="UNCHARACTERIZED PROTEIN YQGE"/>
    <property type="match status" value="1"/>
</dbReference>
<dbReference type="PANTHER" id="PTHR30327:SF1">
    <property type="entry name" value="UPF0301 PROTEIN YQGE"/>
    <property type="match status" value="1"/>
</dbReference>
<dbReference type="Pfam" id="PF02622">
    <property type="entry name" value="DUF179"/>
    <property type="match status" value="1"/>
</dbReference>
<dbReference type="SUPFAM" id="SSF143456">
    <property type="entry name" value="VC0467-like"/>
    <property type="match status" value="1"/>
</dbReference>
<protein>
    <recommendedName>
        <fullName evidence="1">UPF0301 protein Pcryo_0062</fullName>
    </recommendedName>
</protein>
<gene>
    <name type="ordered locus">Pcryo_0062</name>
</gene>
<comment type="similarity">
    <text evidence="1">Belongs to the UPF0301 (AlgH) family.</text>
</comment>
<organism>
    <name type="scientific">Psychrobacter cryohalolentis (strain ATCC BAA-1226 / DSM 17306 / VKM B-2378 / K5)</name>
    <dbReference type="NCBI Taxonomy" id="335284"/>
    <lineage>
        <taxon>Bacteria</taxon>
        <taxon>Pseudomonadati</taxon>
        <taxon>Pseudomonadota</taxon>
        <taxon>Gammaproteobacteria</taxon>
        <taxon>Moraxellales</taxon>
        <taxon>Moraxellaceae</taxon>
        <taxon>Psychrobacter</taxon>
    </lineage>
</organism>